<comment type="subcellular location">
    <subcellularLocation>
        <location evidence="2">Cell membrane</location>
        <topology evidence="2">Multi-pass membrane protein</topology>
    </subcellularLocation>
</comment>
<proteinExistence type="predicted"/>
<sequence length="141" mass="15935">MILMNLIEALTNPDTFFKKLSQKEISLKEPFLIVLIFSILIAISAYISTSIIYKIFPPQYQQVLAFTKIIALISTFIGGIVAWLIIAGFMHLISMIFKGEGSFKKTLSFTGYGFLPNIVGALITIPIAYYMREISQQEMRL</sequence>
<feature type="chain" id="PRO_0000107045" description="Uncharacterized protein MJ0794">
    <location>
        <begin position="1"/>
        <end position="141"/>
    </location>
</feature>
<feature type="transmembrane region" description="Helical" evidence="1">
    <location>
        <begin position="32"/>
        <end position="52"/>
    </location>
</feature>
<feature type="transmembrane region" description="Helical" evidence="1">
    <location>
        <begin position="69"/>
        <end position="89"/>
    </location>
</feature>
<feature type="transmembrane region" description="Helical" evidence="1">
    <location>
        <begin position="109"/>
        <end position="129"/>
    </location>
</feature>
<organism>
    <name type="scientific">Methanocaldococcus jannaschii (strain ATCC 43067 / DSM 2661 / JAL-1 / JCM 10045 / NBRC 100440)</name>
    <name type="common">Methanococcus jannaschii</name>
    <dbReference type="NCBI Taxonomy" id="243232"/>
    <lineage>
        <taxon>Archaea</taxon>
        <taxon>Methanobacteriati</taxon>
        <taxon>Methanobacteriota</taxon>
        <taxon>Methanomada group</taxon>
        <taxon>Methanococci</taxon>
        <taxon>Methanococcales</taxon>
        <taxon>Methanocaldococcaceae</taxon>
        <taxon>Methanocaldococcus</taxon>
    </lineage>
</organism>
<gene>
    <name type="ordered locus">MJ0794</name>
</gene>
<dbReference type="EMBL" id="L77117">
    <property type="protein sequence ID" value="AAB98797.1"/>
    <property type="molecule type" value="Genomic_DNA"/>
</dbReference>
<dbReference type="PIR" id="B64399">
    <property type="entry name" value="B64399"/>
</dbReference>
<dbReference type="SMR" id="Q58204"/>
<dbReference type="STRING" id="243232.MJ_0794"/>
<dbReference type="PaxDb" id="243232-MJ_0794"/>
<dbReference type="EnsemblBacteria" id="AAB98797">
    <property type="protein sequence ID" value="AAB98797"/>
    <property type="gene ID" value="MJ_0794"/>
</dbReference>
<dbReference type="KEGG" id="mja:MJ_0794"/>
<dbReference type="eggNOG" id="arCOG02054">
    <property type="taxonomic scope" value="Archaea"/>
</dbReference>
<dbReference type="HOGENOM" id="CLU_1821030_0_0_2"/>
<dbReference type="InParanoid" id="Q58204"/>
<dbReference type="PhylomeDB" id="Q58204"/>
<dbReference type="Proteomes" id="UP000000805">
    <property type="component" value="Chromosome"/>
</dbReference>
<dbReference type="GO" id="GO:0005886">
    <property type="term" value="C:plasma membrane"/>
    <property type="evidence" value="ECO:0007669"/>
    <property type="project" value="UniProtKB-SubCell"/>
</dbReference>
<dbReference type="InterPro" id="IPR006977">
    <property type="entry name" value="Yip1_dom"/>
</dbReference>
<dbReference type="Pfam" id="PF04893">
    <property type="entry name" value="Yip1"/>
    <property type="match status" value="1"/>
</dbReference>
<protein>
    <recommendedName>
        <fullName>Uncharacterized protein MJ0794</fullName>
    </recommendedName>
</protein>
<accession>Q58204</accession>
<reference key="1">
    <citation type="journal article" date="1996" name="Science">
        <title>Complete genome sequence of the methanogenic archaeon, Methanococcus jannaschii.</title>
        <authorList>
            <person name="Bult C.J."/>
            <person name="White O."/>
            <person name="Olsen G.J."/>
            <person name="Zhou L."/>
            <person name="Fleischmann R.D."/>
            <person name="Sutton G.G."/>
            <person name="Blake J.A."/>
            <person name="FitzGerald L.M."/>
            <person name="Clayton R.A."/>
            <person name="Gocayne J.D."/>
            <person name="Kerlavage A.R."/>
            <person name="Dougherty B.A."/>
            <person name="Tomb J.-F."/>
            <person name="Adams M.D."/>
            <person name="Reich C.I."/>
            <person name="Overbeek R."/>
            <person name="Kirkness E.F."/>
            <person name="Weinstock K.G."/>
            <person name="Merrick J.M."/>
            <person name="Glodek A."/>
            <person name="Scott J.L."/>
            <person name="Geoghagen N.S.M."/>
            <person name="Weidman J.F."/>
            <person name="Fuhrmann J.L."/>
            <person name="Nguyen D."/>
            <person name="Utterback T.R."/>
            <person name="Kelley J.M."/>
            <person name="Peterson J.D."/>
            <person name="Sadow P.W."/>
            <person name="Hanna M.C."/>
            <person name="Cotton M.D."/>
            <person name="Roberts K.M."/>
            <person name="Hurst M.A."/>
            <person name="Kaine B.P."/>
            <person name="Borodovsky M."/>
            <person name="Klenk H.-P."/>
            <person name="Fraser C.M."/>
            <person name="Smith H.O."/>
            <person name="Woese C.R."/>
            <person name="Venter J.C."/>
        </authorList>
    </citation>
    <scope>NUCLEOTIDE SEQUENCE [LARGE SCALE GENOMIC DNA]</scope>
    <source>
        <strain>ATCC 43067 / DSM 2661 / JAL-1 / JCM 10045 / NBRC 100440</strain>
    </source>
</reference>
<name>Y794_METJA</name>
<evidence type="ECO:0000255" key="1"/>
<evidence type="ECO:0000305" key="2"/>
<keyword id="KW-1003">Cell membrane</keyword>
<keyword id="KW-0472">Membrane</keyword>
<keyword id="KW-1185">Reference proteome</keyword>
<keyword id="KW-0812">Transmembrane</keyword>
<keyword id="KW-1133">Transmembrane helix</keyword>